<name>TOLB2_NOVAD</name>
<proteinExistence type="inferred from homology"/>
<protein>
    <recommendedName>
        <fullName evidence="1">Tol-Pal system protein TolB 2</fullName>
    </recommendedName>
</protein>
<evidence type="ECO:0000255" key="1">
    <source>
        <dbReference type="HAMAP-Rule" id="MF_00671"/>
    </source>
</evidence>
<evidence type="ECO:0000256" key="2">
    <source>
        <dbReference type="SAM" id="MobiDB-lite"/>
    </source>
</evidence>
<accession>Q2G9L1</accession>
<sequence>MKIRHLLLLAGLVSAPAIVAAQQTALPSSSAAQASGDDDGGLTGSVSDESEWQDLGIAIPSFPTNASVPTAAEGGTTEALGRNVARVVFNDLKNNGLFKPVGPDALPAIAFPQVAAPAFDAWRGRSAEMLVQGFVKANEDGRLTVGCYLYDVALGSELARQGYVVKPEEWRRAAHKCADMVYSRLSGESPFFDSKIAYIAETGPKDRRRKQLAIMDSDGANHRFITNGQATALTPRYSPDYSQIVYLSYLNGAPRIYIYNIGTGQQKLVTSSTNPTFAPRWSPDGKWILYSMSVAGNTDIYRVSVNGGASTRLTDSPGIDVGGSYSPDGSRIVFESDRSGSQQLYVMNADGSNQKRISFFGGRAATPEWSPRGDQIAFTHLGGNFRIAVTDPSGGNMRFLTDSWQDEAPTWSPNGRIVQFFRTERGSGKTGIWQVDLTGRNERKLNTPVDGSDPAWGPVLP</sequence>
<dbReference type="EMBL" id="CP000248">
    <property type="protein sequence ID" value="ABD25462.1"/>
    <property type="molecule type" value="Genomic_DNA"/>
</dbReference>
<dbReference type="RefSeq" id="WP_011444676.1">
    <property type="nucleotide sequence ID" value="NC_007794.1"/>
</dbReference>
<dbReference type="SMR" id="Q2G9L1"/>
<dbReference type="STRING" id="279238.Saro_1017"/>
<dbReference type="KEGG" id="nar:Saro_1017"/>
<dbReference type="eggNOG" id="COG0823">
    <property type="taxonomic scope" value="Bacteria"/>
</dbReference>
<dbReference type="HOGENOM" id="CLU_047123_0_0_5"/>
<dbReference type="Proteomes" id="UP000009134">
    <property type="component" value="Chromosome"/>
</dbReference>
<dbReference type="GO" id="GO:0042597">
    <property type="term" value="C:periplasmic space"/>
    <property type="evidence" value="ECO:0007669"/>
    <property type="project" value="UniProtKB-SubCell"/>
</dbReference>
<dbReference type="GO" id="GO:0051301">
    <property type="term" value="P:cell division"/>
    <property type="evidence" value="ECO:0007669"/>
    <property type="project" value="UniProtKB-UniRule"/>
</dbReference>
<dbReference type="GO" id="GO:0017038">
    <property type="term" value="P:protein import"/>
    <property type="evidence" value="ECO:0007669"/>
    <property type="project" value="InterPro"/>
</dbReference>
<dbReference type="Gene3D" id="2.120.10.30">
    <property type="entry name" value="TolB, C-terminal domain"/>
    <property type="match status" value="1"/>
</dbReference>
<dbReference type="Gene3D" id="3.40.50.10070">
    <property type="entry name" value="TolB, N-terminal domain"/>
    <property type="match status" value="1"/>
</dbReference>
<dbReference type="HAMAP" id="MF_00671">
    <property type="entry name" value="TolB"/>
    <property type="match status" value="1"/>
</dbReference>
<dbReference type="InterPro" id="IPR011042">
    <property type="entry name" value="6-blade_b-propeller_TolB-like"/>
</dbReference>
<dbReference type="InterPro" id="IPR011659">
    <property type="entry name" value="PD40"/>
</dbReference>
<dbReference type="InterPro" id="IPR014167">
    <property type="entry name" value="Tol-Pal_TolB"/>
</dbReference>
<dbReference type="InterPro" id="IPR007195">
    <property type="entry name" value="TolB_N"/>
</dbReference>
<dbReference type="NCBIfam" id="TIGR02800">
    <property type="entry name" value="propeller_TolB"/>
    <property type="match status" value="1"/>
</dbReference>
<dbReference type="PANTHER" id="PTHR36842:SF1">
    <property type="entry name" value="PROTEIN TOLB"/>
    <property type="match status" value="1"/>
</dbReference>
<dbReference type="PANTHER" id="PTHR36842">
    <property type="entry name" value="PROTEIN TOLB HOMOLOG"/>
    <property type="match status" value="1"/>
</dbReference>
<dbReference type="Pfam" id="PF07676">
    <property type="entry name" value="PD40"/>
    <property type="match status" value="4"/>
</dbReference>
<dbReference type="Pfam" id="PF04052">
    <property type="entry name" value="TolB_N"/>
    <property type="match status" value="1"/>
</dbReference>
<dbReference type="SUPFAM" id="SSF52964">
    <property type="entry name" value="TolB, N-terminal domain"/>
    <property type="match status" value="1"/>
</dbReference>
<dbReference type="SUPFAM" id="SSF69304">
    <property type="entry name" value="Tricorn protease N-terminal domain"/>
    <property type="match status" value="1"/>
</dbReference>
<keyword id="KW-0131">Cell cycle</keyword>
<keyword id="KW-0132">Cell division</keyword>
<keyword id="KW-0574">Periplasm</keyword>
<keyword id="KW-1185">Reference proteome</keyword>
<keyword id="KW-0732">Signal</keyword>
<feature type="signal peptide" evidence="1">
    <location>
        <begin position="1"/>
        <end position="20"/>
    </location>
</feature>
<feature type="chain" id="PRO_0000259064" description="Tol-Pal system protein TolB 2" evidence="1">
    <location>
        <begin position="21"/>
        <end position="461"/>
    </location>
</feature>
<feature type="region of interest" description="Disordered" evidence="2">
    <location>
        <begin position="28"/>
        <end position="47"/>
    </location>
</feature>
<gene>
    <name evidence="1" type="primary">tolB2</name>
    <name type="ordered locus">Saro_1017</name>
</gene>
<comment type="function">
    <text evidence="1">Part of the Tol-Pal system, which plays a role in outer membrane invagination during cell division and is important for maintaining outer membrane integrity.</text>
</comment>
<comment type="subunit">
    <text evidence="1">The Tol-Pal system is composed of five core proteins: the inner membrane proteins TolA, TolQ and TolR, the periplasmic protein TolB and the outer membrane protein Pal. They form a network linking the inner and outer membranes and the peptidoglycan layer.</text>
</comment>
<comment type="subcellular location">
    <subcellularLocation>
        <location evidence="1">Periplasm</location>
    </subcellularLocation>
</comment>
<comment type="similarity">
    <text evidence="1">Belongs to the TolB family.</text>
</comment>
<reference key="1">
    <citation type="submission" date="2006-01" db="EMBL/GenBank/DDBJ databases">
        <title>Complete sequence of Novosphingobium aromaticivorans DSM 12444.</title>
        <authorList>
            <consortium name="US DOE Joint Genome Institute"/>
            <person name="Copeland A."/>
            <person name="Lucas S."/>
            <person name="Lapidus A."/>
            <person name="Barry K."/>
            <person name="Detter J.C."/>
            <person name="Glavina T."/>
            <person name="Hammon N."/>
            <person name="Israni S."/>
            <person name="Pitluck S."/>
            <person name="Chain P."/>
            <person name="Malfatti S."/>
            <person name="Shin M."/>
            <person name="Vergez L."/>
            <person name="Schmutz J."/>
            <person name="Larimer F."/>
            <person name="Land M."/>
            <person name="Kyrpides N."/>
            <person name="Ivanova N."/>
            <person name="Fredrickson J."/>
            <person name="Balkwill D."/>
            <person name="Romine M.F."/>
            <person name="Richardson P."/>
        </authorList>
    </citation>
    <scope>NUCLEOTIDE SEQUENCE [LARGE SCALE GENOMIC DNA]</scope>
    <source>
        <strain>ATCC 700278 / DSM 12444 / CCUG 56034 / CIP 105152 / NBRC 16084 / F199</strain>
    </source>
</reference>
<organism>
    <name type="scientific">Novosphingobium aromaticivorans (strain ATCC 700278 / DSM 12444 / CCUG 56034 / CIP 105152 / NBRC 16084 / F199)</name>
    <dbReference type="NCBI Taxonomy" id="279238"/>
    <lineage>
        <taxon>Bacteria</taxon>
        <taxon>Pseudomonadati</taxon>
        <taxon>Pseudomonadota</taxon>
        <taxon>Alphaproteobacteria</taxon>
        <taxon>Sphingomonadales</taxon>
        <taxon>Sphingomonadaceae</taxon>
        <taxon>Novosphingobium</taxon>
    </lineage>
</organism>